<sequence>MKRKQQEDDNDDGVEKAVSPVLATTSNTMSTDLLLQSSSKLSQKQDYIFHGGRRHVRPYYFEFISHVNKRWTGKTIVDLFADEFKGRPRDYYVGAVKSGRIKVDGEIVPVSYIVKSSQKITHFLHRHEPPVMIDDVVILHQEPDVVTVCKPASVPVHPCGQYRKNTIVGILDAEHDLGTLFPIHRLDRLVSGLLIIARTAAKADFFRQQIEGGMVKKRYIAKVIGVFPEDEMIVDANINYNGSEGRSTAEDANSSGDDKKVKGKPACTKFTRIDTNGTHSLVSCEPVTGRTHQIRVHLQYTGHPIANDPLYLNQHIDNLETYIAKRIDAGERKIVSPDDYVYSSEDFSIDPMCTNCPKLIPQGYEEHDEALWLHCVQYCGTGWEYECPYPSWASL</sequence>
<gene>
    <name type="ordered locus">At5g51140</name>
    <name type="ORF">MWD22.8</name>
</gene>
<evidence type="ECO:0000250" key="1"/>
<evidence type="ECO:0000255" key="2">
    <source>
        <dbReference type="PROSITE-ProRule" id="PRU00182"/>
    </source>
</evidence>
<evidence type="ECO:0000256" key="3">
    <source>
        <dbReference type="SAM" id="MobiDB-lite"/>
    </source>
</evidence>
<evidence type="ECO:0000305" key="4"/>
<reference key="1">
    <citation type="journal article" date="2000" name="DNA Res.">
        <title>Structural analysis of Arabidopsis thaliana chromosome 5. X. Sequence features of the regions of 3,076,755 bp covered by sixty P1 and TAC clones.</title>
        <authorList>
            <person name="Sato S."/>
            <person name="Nakamura Y."/>
            <person name="Kaneko T."/>
            <person name="Katoh T."/>
            <person name="Asamizu E."/>
            <person name="Kotani H."/>
            <person name="Tabata S."/>
        </authorList>
    </citation>
    <scope>NUCLEOTIDE SEQUENCE [LARGE SCALE GENOMIC DNA]</scope>
    <source>
        <strain>cv. Columbia</strain>
    </source>
</reference>
<reference key="2">
    <citation type="journal article" date="2017" name="Plant J.">
        <title>Araport11: a complete reannotation of the Arabidopsis thaliana reference genome.</title>
        <authorList>
            <person name="Cheng C.Y."/>
            <person name="Krishnakumar V."/>
            <person name="Chan A.P."/>
            <person name="Thibaud-Nissen F."/>
            <person name="Schobel S."/>
            <person name="Town C.D."/>
        </authorList>
    </citation>
    <scope>GENOME REANNOTATION</scope>
    <source>
        <strain>cv. Columbia</strain>
    </source>
</reference>
<reference key="3">
    <citation type="submission" date="2002-03" db="EMBL/GenBank/DDBJ databases">
        <title>Full-length cDNA from Arabidopsis thaliana.</title>
        <authorList>
            <person name="Brover V.V."/>
            <person name="Troukhan M.E."/>
            <person name="Alexandrov N.A."/>
            <person name="Lu Y.-P."/>
            <person name="Flavell R.B."/>
            <person name="Feldmann K.A."/>
        </authorList>
    </citation>
    <scope>NUCLEOTIDE SEQUENCE [LARGE SCALE MRNA]</scope>
</reference>
<reference key="4">
    <citation type="journal article" date="2003" name="Science">
        <title>Empirical analysis of transcriptional activity in the Arabidopsis genome.</title>
        <authorList>
            <person name="Yamada K."/>
            <person name="Lim J."/>
            <person name="Dale J.M."/>
            <person name="Chen H."/>
            <person name="Shinn P."/>
            <person name="Palm C.J."/>
            <person name="Southwick A.M."/>
            <person name="Wu H.C."/>
            <person name="Kim C.J."/>
            <person name="Nguyen M."/>
            <person name="Pham P.K."/>
            <person name="Cheuk R.F."/>
            <person name="Karlin-Newmann G."/>
            <person name="Liu S.X."/>
            <person name="Lam B."/>
            <person name="Sakano H."/>
            <person name="Wu T."/>
            <person name="Yu G."/>
            <person name="Miranda M."/>
            <person name="Quach H.L."/>
            <person name="Tripp M."/>
            <person name="Chang C.H."/>
            <person name="Lee J.M."/>
            <person name="Toriumi M.J."/>
            <person name="Chan M.M."/>
            <person name="Tang C.C."/>
            <person name="Onodera C.S."/>
            <person name="Deng J.M."/>
            <person name="Akiyama K."/>
            <person name="Ansari Y."/>
            <person name="Arakawa T."/>
            <person name="Banh J."/>
            <person name="Banno F."/>
            <person name="Bowser L."/>
            <person name="Brooks S.Y."/>
            <person name="Carninci P."/>
            <person name="Chao Q."/>
            <person name="Choy N."/>
            <person name="Enju A."/>
            <person name="Goldsmith A.D."/>
            <person name="Gurjal M."/>
            <person name="Hansen N.F."/>
            <person name="Hayashizaki Y."/>
            <person name="Johnson-Hopson C."/>
            <person name="Hsuan V.W."/>
            <person name="Iida K."/>
            <person name="Karnes M."/>
            <person name="Khan S."/>
            <person name="Koesema E."/>
            <person name="Ishida J."/>
            <person name="Jiang P.X."/>
            <person name="Jones T."/>
            <person name="Kawai J."/>
            <person name="Kamiya A."/>
            <person name="Meyers C."/>
            <person name="Nakajima M."/>
            <person name="Narusaka M."/>
            <person name="Seki M."/>
            <person name="Sakurai T."/>
            <person name="Satou M."/>
            <person name="Tamse R."/>
            <person name="Vaysberg M."/>
            <person name="Wallender E.K."/>
            <person name="Wong C."/>
            <person name="Yamamura Y."/>
            <person name="Yuan S."/>
            <person name="Shinozaki K."/>
            <person name="Davis R.W."/>
            <person name="Theologis A."/>
            <person name="Ecker J.R."/>
        </authorList>
    </citation>
    <scope>NUCLEOTIDE SEQUENCE [LARGE SCALE MRNA] OF 13-395</scope>
    <source>
        <strain>cv. Columbia</strain>
    </source>
</reference>
<name>PUS7_ARATH</name>
<keyword id="KW-0025">Alternative splicing</keyword>
<keyword id="KW-0413">Isomerase</keyword>
<keyword id="KW-1185">Reference proteome</keyword>
<keyword id="KW-0694">RNA-binding</keyword>
<proteinExistence type="evidence at transcript level"/>
<accession>Q9LU60</accession>
<accession>Q8LG24</accession>
<accession>Q8W4Q8</accession>
<comment type="catalytic activity">
    <reaction>
        <text>a uridine in RNA = a pseudouridine in RNA</text>
        <dbReference type="Rhea" id="RHEA:48348"/>
        <dbReference type="Rhea" id="RHEA-COMP:12068"/>
        <dbReference type="Rhea" id="RHEA-COMP:12069"/>
        <dbReference type="ChEBI" id="CHEBI:65314"/>
        <dbReference type="ChEBI" id="CHEBI:65315"/>
    </reaction>
</comment>
<comment type="alternative products">
    <event type="alternative splicing"/>
    <isoform>
        <id>Q9LU60-1</id>
        <name>1</name>
        <sequence type="displayed"/>
    </isoform>
    <text>A number of isoforms are produced. According to EST sequences.</text>
</comment>
<comment type="similarity">
    <text evidence="4">Belongs to the pseudouridine synthase RluA family.</text>
</comment>
<comment type="sequence caution" evidence="4">
    <conflict type="erroneous initiation">
        <sequence resource="EMBL-CDS" id="AAL31256"/>
    </conflict>
</comment>
<feature type="chain" id="PRO_0000371427" description="RNA pseudouridine synthase 7">
    <location>
        <begin position="1"/>
        <end position="395"/>
    </location>
</feature>
<feature type="domain" description="S4 RNA-binding" evidence="2">
    <location>
        <begin position="74"/>
        <end position="136"/>
    </location>
</feature>
<feature type="region of interest" description="Disordered" evidence="3">
    <location>
        <begin position="1"/>
        <end position="21"/>
    </location>
</feature>
<feature type="region of interest" description="Disordered" evidence="3">
    <location>
        <begin position="244"/>
        <end position="263"/>
    </location>
</feature>
<feature type="compositionally biased region" description="Polar residues" evidence="3">
    <location>
        <begin position="244"/>
        <end position="255"/>
    </location>
</feature>
<feature type="active site" evidence="1">
    <location>
        <position position="187"/>
    </location>
</feature>
<feature type="sequence conflict" description="In Ref. 3; AAM61068." evidence="4" ref="3">
    <original>P</original>
    <variation>S</variation>
    <location>
        <position position="182"/>
    </location>
</feature>
<dbReference type="EC" id="5.4.99.-"/>
<dbReference type="EMBL" id="AB023044">
    <property type="protein sequence ID" value="BAA97376.1"/>
    <property type="molecule type" value="Genomic_DNA"/>
</dbReference>
<dbReference type="EMBL" id="CP002688">
    <property type="protein sequence ID" value="AED96042.1"/>
    <property type="molecule type" value="Genomic_DNA"/>
</dbReference>
<dbReference type="EMBL" id="AY084499">
    <property type="protein sequence ID" value="AAM61068.1"/>
    <property type="molecule type" value="mRNA"/>
</dbReference>
<dbReference type="EMBL" id="AY061753">
    <property type="protein sequence ID" value="AAL31256.1"/>
    <property type="status" value="ALT_INIT"/>
    <property type="molecule type" value="mRNA"/>
</dbReference>
<dbReference type="EMBL" id="BT000855">
    <property type="protein sequence ID" value="AAN38692.1"/>
    <property type="molecule type" value="mRNA"/>
</dbReference>
<dbReference type="RefSeq" id="NP_199927.1">
    <molecule id="Q9LU60-1"/>
    <property type="nucleotide sequence ID" value="NM_124493.4"/>
</dbReference>
<dbReference type="SMR" id="Q9LU60"/>
<dbReference type="FunCoup" id="Q9LU60">
    <property type="interactions" value="3863"/>
</dbReference>
<dbReference type="STRING" id="3702.Q9LU60"/>
<dbReference type="iPTMnet" id="Q9LU60"/>
<dbReference type="PaxDb" id="3702-AT5G51140.2"/>
<dbReference type="EnsemblPlants" id="AT5G51140.1">
    <molecule id="Q9LU60-1"/>
    <property type="protein sequence ID" value="AT5G51140.1"/>
    <property type="gene ID" value="AT5G51140"/>
</dbReference>
<dbReference type="GeneID" id="835188"/>
<dbReference type="Gramene" id="AT5G51140.1">
    <molecule id="Q9LU60-1"/>
    <property type="protein sequence ID" value="AT5G51140.1"/>
    <property type="gene ID" value="AT5G51140"/>
</dbReference>
<dbReference type="KEGG" id="ath:AT5G51140"/>
<dbReference type="Araport" id="AT5G51140"/>
<dbReference type="TAIR" id="AT5G51140"/>
<dbReference type="eggNOG" id="KOG1919">
    <property type="taxonomic scope" value="Eukaryota"/>
</dbReference>
<dbReference type="HOGENOM" id="CLU_016902_12_4_1"/>
<dbReference type="InParanoid" id="Q9LU60"/>
<dbReference type="OMA" id="EPPVMAC"/>
<dbReference type="OrthoDB" id="424794at2759"/>
<dbReference type="PhylomeDB" id="Q9LU60"/>
<dbReference type="PRO" id="PR:Q9LU60"/>
<dbReference type="Proteomes" id="UP000006548">
    <property type="component" value="Chromosome 5"/>
</dbReference>
<dbReference type="ExpressionAtlas" id="Q9LU60">
    <property type="expression patterns" value="baseline and differential"/>
</dbReference>
<dbReference type="GO" id="GO:0009982">
    <property type="term" value="F:pseudouridine synthase activity"/>
    <property type="evidence" value="ECO:0007669"/>
    <property type="project" value="InterPro"/>
</dbReference>
<dbReference type="GO" id="GO:0003723">
    <property type="term" value="F:RNA binding"/>
    <property type="evidence" value="ECO:0007669"/>
    <property type="project" value="UniProtKB-KW"/>
</dbReference>
<dbReference type="GO" id="GO:0001522">
    <property type="term" value="P:pseudouridine synthesis"/>
    <property type="evidence" value="ECO:0007669"/>
    <property type="project" value="InterPro"/>
</dbReference>
<dbReference type="CDD" id="cd02557">
    <property type="entry name" value="PseudoU_synth_ScRIB2"/>
    <property type="match status" value="1"/>
</dbReference>
<dbReference type="FunFam" id="3.30.2350.10:FF:000036">
    <property type="entry name" value="Pseudouridine synthase"/>
    <property type="match status" value="1"/>
</dbReference>
<dbReference type="Gene3D" id="3.30.2350.10">
    <property type="entry name" value="Pseudouridine synthase"/>
    <property type="match status" value="1"/>
</dbReference>
<dbReference type="InterPro" id="IPR020103">
    <property type="entry name" value="PsdUridine_synth_cat_dom_sf"/>
</dbReference>
<dbReference type="InterPro" id="IPR006224">
    <property type="entry name" value="PsdUridine_synth_RluA-like_CS"/>
</dbReference>
<dbReference type="InterPro" id="IPR006225">
    <property type="entry name" value="PsdUridine_synth_RluC/D"/>
</dbReference>
<dbReference type="InterPro" id="IPR006145">
    <property type="entry name" value="PsdUridine_synth_RsuA/RluA"/>
</dbReference>
<dbReference type="InterPro" id="IPR050188">
    <property type="entry name" value="RluA_PseudoU_synthase"/>
</dbReference>
<dbReference type="NCBIfam" id="TIGR00005">
    <property type="entry name" value="rluA_subfam"/>
    <property type="match status" value="1"/>
</dbReference>
<dbReference type="PANTHER" id="PTHR21600">
    <property type="entry name" value="MITOCHONDRIAL RNA PSEUDOURIDINE SYNTHASE"/>
    <property type="match status" value="1"/>
</dbReference>
<dbReference type="PANTHER" id="PTHR21600:SF40">
    <property type="entry name" value="PSEUDOURIDYLATE SYNTHASE RPUSD2"/>
    <property type="match status" value="1"/>
</dbReference>
<dbReference type="Pfam" id="PF00849">
    <property type="entry name" value="PseudoU_synth_2"/>
    <property type="match status" value="1"/>
</dbReference>
<dbReference type="SUPFAM" id="SSF55120">
    <property type="entry name" value="Pseudouridine synthase"/>
    <property type="match status" value="1"/>
</dbReference>
<dbReference type="PROSITE" id="PS01129">
    <property type="entry name" value="PSI_RLU"/>
    <property type="match status" value="1"/>
</dbReference>
<dbReference type="PROSITE" id="PS50889">
    <property type="entry name" value="S4"/>
    <property type="match status" value="1"/>
</dbReference>
<protein>
    <recommendedName>
        <fullName>RNA pseudouridine synthase 7</fullName>
        <ecNumber>5.4.99.-</ecNumber>
    </recommendedName>
    <alternativeName>
        <fullName>RNA pseudouridylate synthase 7</fullName>
    </alternativeName>
    <alternativeName>
        <fullName>RNA-uridine isomerase 7</fullName>
    </alternativeName>
</protein>
<organism>
    <name type="scientific">Arabidopsis thaliana</name>
    <name type="common">Mouse-ear cress</name>
    <dbReference type="NCBI Taxonomy" id="3702"/>
    <lineage>
        <taxon>Eukaryota</taxon>
        <taxon>Viridiplantae</taxon>
        <taxon>Streptophyta</taxon>
        <taxon>Embryophyta</taxon>
        <taxon>Tracheophyta</taxon>
        <taxon>Spermatophyta</taxon>
        <taxon>Magnoliopsida</taxon>
        <taxon>eudicotyledons</taxon>
        <taxon>Gunneridae</taxon>
        <taxon>Pentapetalae</taxon>
        <taxon>rosids</taxon>
        <taxon>malvids</taxon>
        <taxon>Brassicales</taxon>
        <taxon>Brassicaceae</taxon>
        <taxon>Camelineae</taxon>
        <taxon>Arabidopsis</taxon>
    </lineage>
</organism>